<name>HBA_APTFO</name>
<dbReference type="PIR" id="S46402">
    <property type="entry name" value="HAPN"/>
</dbReference>
<dbReference type="SMR" id="P01980"/>
<dbReference type="GO" id="GO:0072562">
    <property type="term" value="C:blood microparticle"/>
    <property type="evidence" value="ECO:0007669"/>
    <property type="project" value="TreeGrafter"/>
</dbReference>
<dbReference type="GO" id="GO:0031838">
    <property type="term" value="C:haptoglobin-hemoglobin complex"/>
    <property type="evidence" value="ECO:0007669"/>
    <property type="project" value="TreeGrafter"/>
</dbReference>
<dbReference type="GO" id="GO:0005833">
    <property type="term" value="C:hemoglobin complex"/>
    <property type="evidence" value="ECO:0007669"/>
    <property type="project" value="InterPro"/>
</dbReference>
<dbReference type="GO" id="GO:0031720">
    <property type="term" value="F:haptoglobin binding"/>
    <property type="evidence" value="ECO:0007669"/>
    <property type="project" value="TreeGrafter"/>
</dbReference>
<dbReference type="GO" id="GO:0020037">
    <property type="term" value="F:heme binding"/>
    <property type="evidence" value="ECO:0007669"/>
    <property type="project" value="InterPro"/>
</dbReference>
<dbReference type="GO" id="GO:0005506">
    <property type="term" value="F:iron ion binding"/>
    <property type="evidence" value="ECO:0007669"/>
    <property type="project" value="InterPro"/>
</dbReference>
<dbReference type="GO" id="GO:0043177">
    <property type="term" value="F:organic acid binding"/>
    <property type="evidence" value="ECO:0007669"/>
    <property type="project" value="TreeGrafter"/>
</dbReference>
<dbReference type="GO" id="GO:0019825">
    <property type="term" value="F:oxygen binding"/>
    <property type="evidence" value="ECO:0007669"/>
    <property type="project" value="InterPro"/>
</dbReference>
<dbReference type="GO" id="GO:0005344">
    <property type="term" value="F:oxygen carrier activity"/>
    <property type="evidence" value="ECO:0007669"/>
    <property type="project" value="UniProtKB-KW"/>
</dbReference>
<dbReference type="GO" id="GO:0004601">
    <property type="term" value="F:peroxidase activity"/>
    <property type="evidence" value="ECO:0007669"/>
    <property type="project" value="TreeGrafter"/>
</dbReference>
<dbReference type="GO" id="GO:0042744">
    <property type="term" value="P:hydrogen peroxide catabolic process"/>
    <property type="evidence" value="ECO:0007669"/>
    <property type="project" value="TreeGrafter"/>
</dbReference>
<dbReference type="CDD" id="cd08927">
    <property type="entry name" value="Hb-alpha-like"/>
    <property type="match status" value="1"/>
</dbReference>
<dbReference type="FunFam" id="1.10.490.10:FF:000002">
    <property type="entry name" value="Hemoglobin subunit alpha"/>
    <property type="match status" value="1"/>
</dbReference>
<dbReference type="Gene3D" id="1.10.490.10">
    <property type="entry name" value="Globins"/>
    <property type="match status" value="1"/>
</dbReference>
<dbReference type="InterPro" id="IPR000971">
    <property type="entry name" value="Globin"/>
</dbReference>
<dbReference type="InterPro" id="IPR009050">
    <property type="entry name" value="Globin-like_sf"/>
</dbReference>
<dbReference type="InterPro" id="IPR012292">
    <property type="entry name" value="Globin/Proto"/>
</dbReference>
<dbReference type="InterPro" id="IPR002338">
    <property type="entry name" value="Hemoglobin_a-typ"/>
</dbReference>
<dbReference type="InterPro" id="IPR050056">
    <property type="entry name" value="Hemoglobin_oxygen_transport"/>
</dbReference>
<dbReference type="InterPro" id="IPR002339">
    <property type="entry name" value="Hemoglobin_pi"/>
</dbReference>
<dbReference type="PANTHER" id="PTHR11442">
    <property type="entry name" value="HEMOGLOBIN FAMILY MEMBER"/>
    <property type="match status" value="1"/>
</dbReference>
<dbReference type="PANTHER" id="PTHR11442:SF48">
    <property type="entry name" value="HEMOGLOBIN SUBUNIT ALPHA"/>
    <property type="match status" value="1"/>
</dbReference>
<dbReference type="Pfam" id="PF00042">
    <property type="entry name" value="Globin"/>
    <property type="match status" value="1"/>
</dbReference>
<dbReference type="PRINTS" id="PR00612">
    <property type="entry name" value="ALPHAHAEM"/>
</dbReference>
<dbReference type="PRINTS" id="PR00815">
    <property type="entry name" value="PIHAEM"/>
</dbReference>
<dbReference type="SUPFAM" id="SSF46458">
    <property type="entry name" value="Globin-like"/>
    <property type="match status" value="1"/>
</dbReference>
<dbReference type="PROSITE" id="PS01033">
    <property type="entry name" value="GLOBIN"/>
    <property type="match status" value="1"/>
</dbReference>
<feature type="initiator methionine" description="Removed" evidence="1">
    <location>
        <position position="1"/>
    </location>
</feature>
<feature type="chain" id="PRO_0000052555" description="Hemoglobin subunit alpha">
    <location>
        <begin position="2"/>
        <end position="142"/>
    </location>
</feature>
<feature type="domain" description="Globin" evidence="2">
    <location>
        <begin position="2"/>
        <end position="142"/>
    </location>
</feature>
<feature type="binding site" evidence="2">
    <location>
        <position position="59"/>
    </location>
    <ligand>
        <name>O2</name>
        <dbReference type="ChEBI" id="CHEBI:15379"/>
    </ligand>
</feature>
<feature type="binding site" description="proximal binding residue" evidence="2">
    <location>
        <position position="88"/>
    </location>
    <ligand>
        <name>heme b</name>
        <dbReference type="ChEBI" id="CHEBI:60344"/>
    </ligand>
    <ligandPart>
        <name>Fe</name>
        <dbReference type="ChEBI" id="CHEBI:18248"/>
    </ligandPart>
</feature>
<organism>
    <name type="scientific">Aptenodytes forsteri</name>
    <name type="common">Emperor penguin</name>
    <dbReference type="NCBI Taxonomy" id="9233"/>
    <lineage>
        <taxon>Eukaryota</taxon>
        <taxon>Metazoa</taxon>
        <taxon>Chordata</taxon>
        <taxon>Craniata</taxon>
        <taxon>Vertebrata</taxon>
        <taxon>Euteleostomi</taxon>
        <taxon>Archelosauria</taxon>
        <taxon>Archosauria</taxon>
        <taxon>Dinosauria</taxon>
        <taxon>Saurischia</taxon>
        <taxon>Theropoda</taxon>
        <taxon>Coelurosauria</taxon>
        <taxon>Aves</taxon>
        <taxon>Neognathae</taxon>
        <taxon>Neoaves</taxon>
        <taxon>Aequornithes</taxon>
        <taxon>Sphenisciformes</taxon>
        <taxon>Spheniscidae</taxon>
        <taxon>Aptenodytes</taxon>
    </lineage>
</organism>
<comment type="function">
    <text>Involved in oxygen transport from the lung to the various peripheral tissues.</text>
</comment>
<comment type="subunit">
    <text>Heterotetramer of two alpha chains and two beta chains.</text>
</comment>
<comment type="tissue specificity">
    <text>Red blood cells.</text>
</comment>
<comment type="similarity">
    <text evidence="2">Belongs to the globin family.</text>
</comment>
<comment type="sequence caution" evidence="3">
    <conflict type="miscellaneous discrepancy" ref="2"/>
    <text>Differs considerably from that shown in PubMed:8158641.</text>
</comment>
<comment type="sequence caution" evidence="3">
    <conflict type="miscellaneous discrepancy" ref="3"/>
    <text>Differs considerably from that shown in PubMed:8158641.</text>
</comment>
<keyword id="KW-0903">Direct protein sequencing</keyword>
<keyword id="KW-0349">Heme</keyword>
<keyword id="KW-0408">Iron</keyword>
<keyword id="KW-0479">Metal-binding</keyword>
<keyword id="KW-0561">Oxygen transport</keyword>
<keyword id="KW-0813">Transport</keyword>
<accession>P01980</accession>
<evidence type="ECO:0000250" key="1"/>
<evidence type="ECO:0000255" key="2">
    <source>
        <dbReference type="PROSITE-ProRule" id="PRU00238"/>
    </source>
</evidence>
<evidence type="ECO:0000305" key="3"/>
<reference key="1">
    <citation type="journal article" date="1994" name="J. Mol. Biol.">
        <title>Adaptation to extreme environments: structure-function relationships in Emperor penguin haemoglobin.</title>
        <authorList>
            <person name="Tamburrini M."/>
            <person name="Condo S.G."/>
            <person name="di Prisco G."/>
            <person name="Giardina B."/>
        </authorList>
    </citation>
    <scope>PROTEIN SEQUENCE OF 2-142</scope>
</reference>
<reference key="2">
    <citation type="book" date="1978" name="Chemical zoology">
        <editorList>
            <person name="Brush A.H."/>
        </editorList>
        <authorList>
            <person name="Schnek A.G."/>
            <person name="Paul C."/>
            <person name="Vandecasserie C."/>
        </authorList>
    </citation>
    <scope>PRELIMINARY PROTEIN SEQUENCE OF 2-142</scope>
</reference>
<reference key="3">
    <citation type="journal article" date="1973" name="FEBS Lett.">
        <title>Penguin hemoglobin (Aptenodytes forsteri). A 45 residue N-terminal sequence.</title>
        <authorList>
            <person name="Monier C."/>
            <person name="Schnek A.G."/>
            <person name="Dirkx J."/>
            <person name="Leonis J."/>
        </authorList>
    </citation>
    <scope>PROTEIN SEQUENCE OF 2-46</scope>
</reference>
<proteinExistence type="evidence at protein level"/>
<sequence>MVLSANDKSNVKSIFSKISSHAEEYGAETLERMFTTYPQTKTYFPHFDLHHGSAQVKAHGKKVAAALIEAANHIDDIAGALSKLSDLHAEKLRVDPVNFKLLGQCFMVVVAIHHPSALTPEIHASLDKFLCAVGNVLTSKYR</sequence>
<protein>
    <recommendedName>
        <fullName>Hemoglobin subunit alpha</fullName>
    </recommendedName>
    <alternativeName>
        <fullName>Alpha-globin</fullName>
    </alternativeName>
    <alternativeName>
        <fullName>Hemoglobin alpha chain</fullName>
    </alternativeName>
</protein>
<gene>
    <name type="primary">HBA</name>
</gene>